<name>UTS1_CARAU</name>
<evidence type="ECO:0000250" key="1"/>
<evidence type="ECO:0000255" key="2"/>
<evidence type="ECO:0000305" key="3"/>
<proteinExistence type="evidence at transcript level"/>
<organism>
    <name type="scientific">Carassius auratus</name>
    <name type="common">Goldfish</name>
    <dbReference type="NCBI Taxonomy" id="7957"/>
    <lineage>
        <taxon>Eukaryota</taxon>
        <taxon>Metazoa</taxon>
        <taxon>Chordata</taxon>
        <taxon>Craniata</taxon>
        <taxon>Vertebrata</taxon>
        <taxon>Euteleostomi</taxon>
        <taxon>Actinopterygii</taxon>
        <taxon>Neopterygii</taxon>
        <taxon>Teleostei</taxon>
        <taxon>Ostariophysi</taxon>
        <taxon>Cypriniformes</taxon>
        <taxon>Cyprinidae</taxon>
        <taxon>Cyprininae</taxon>
        <taxon>Carassius</taxon>
    </lineage>
</organism>
<sequence length="145" mass="16242">MKPVPLVLLITSVLLTTHIPLSTCRPRDLSLVNSQLDDVLSNGAGDDAMSYLVGEKLLQYLQRNLGAQKASGVLHLPHFPAAQLRSPHEDSSLEELTEFSKRNDDPPISIDLTFHLLRNMIEMARNENQREQAGLNRKYLDEVGK</sequence>
<feature type="signal peptide" evidence="2">
    <location>
        <begin position="1"/>
        <end position="22"/>
    </location>
</feature>
<feature type="chain" id="PRO_0000006249" description="Urophysin" evidence="2">
    <location>
        <begin position="23"/>
        <end position="100"/>
    </location>
</feature>
<feature type="peptide" id="PRO_0000006250" description="Urotensin-1">
    <location>
        <begin position="103"/>
        <end position="143"/>
    </location>
</feature>
<feature type="modified residue" description="Valine amide" evidence="1">
    <location>
        <position position="143"/>
    </location>
</feature>
<dbReference type="EMBL" id="AF129115">
    <property type="protein sequence ID" value="AAF24136.1"/>
    <property type="molecule type" value="mRNA"/>
</dbReference>
<dbReference type="RefSeq" id="XP_026111494.1">
    <property type="nucleotide sequence ID" value="XM_026255709.1"/>
</dbReference>
<dbReference type="RefSeq" id="XP_026146007.1">
    <property type="nucleotide sequence ID" value="XM_026290222.1"/>
</dbReference>
<dbReference type="SMR" id="Q9PTQ4"/>
<dbReference type="GeneID" id="113088214"/>
<dbReference type="GeneID" id="113120425"/>
<dbReference type="OrthoDB" id="9837731at2759"/>
<dbReference type="Proteomes" id="UP000515129">
    <property type="component" value="Chromosome 20"/>
</dbReference>
<dbReference type="GO" id="GO:0005576">
    <property type="term" value="C:extracellular region"/>
    <property type="evidence" value="ECO:0007669"/>
    <property type="project" value="UniProtKB-SubCell"/>
</dbReference>
<dbReference type="GO" id="GO:0005179">
    <property type="term" value="F:hormone activity"/>
    <property type="evidence" value="ECO:0007669"/>
    <property type="project" value="UniProtKB-KW"/>
</dbReference>
<dbReference type="Gene3D" id="6.10.250.1920">
    <property type="match status" value="1"/>
</dbReference>
<dbReference type="InterPro" id="IPR018446">
    <property type="entry name" value="Corticotropin-releasing_fac_CS"/>
</dbReference>
<dbReference type="InterPro" id="IPR000187">
    <property type="entry name" value="CRF"/>
</dbReference>
<dbReference type="InterPro" id="IPR003620">
    <property type="entry name" value="Urocortin_CRF"/>
</dbReference>
<dbReference type="PANTHER" id="PTHR15035">
    <property type="entry name" value="CORTICOLIBERIN/UROCORTIN"/>
    <property type="match status" value="1"/>
</dbReference>
<dbReference type="PANTHER" id="PTHR15035:SF11">
    <property type="entry name" value="UROCORTIN"/>
    <property type="match status" value="1"/>
</dbReference>
<dbReference type="Pfam" id="PF00473">
    <property type="entry name" value="CRF"/>
    <property type="match status" value="1"/>
</dbReference>
<dbReference type="PRINTS" id="PR01612">
    <property type="entry name" value="CRFFAMILY"/>
</dbReference>
<dbReference type="SMART" id="SM00039">
    <property type="entry name" value="CRF"/>
    <property type="match status" value="1"/>
</dbReference>
<dbReference type="PROSITE" id="PS00511">
    <property type="entry name" value="CRF"/>
    <property type="match status" value="1"/>
</dbReference>
<protein>
    <recommendedName>
        <fullName>UI</fullName>
    </recommendedName>
    <component>
        <recommendedName>
            <fullName>Urophysin</fullName>
        </recommendedName>
    </component>
    <component>
        <recommendedName>
            <fullName>Urotensin-1</fullName>
        </recommendedName>
        <alternativeName>
            <fullName>Urotensin I</fullName>
        </alternativeName>
    </component>
</protein>
<accession>Q9PTQ4</accession>
<keyword id="KW-0027">Amidation</keyword>
<keyword id="KW-0165">Cleavage on pair of basic residues</keyword>
<keyword id="KW-0372">Hormone</keyword>
<keyword id="KW-1185">Reference proteome</keyword>
<keyword id="KW-0964">Secreted</keyword>
<keyword id="KW-0732">Signal</keyword>
<comment type="function">
    <text>Urotensin is found in the teleost caudal neurosecretory system. It has a suggested role in osmoregulation and as a corticotropin-releasing factor. The non-hormonal portion of this precursor may be a urotensin binding protein, urophysin.</text>
</comment>
<comment type="subcellular location">
    <subcellularLocation>
        <location>Secreted</location>
    </subcellularLocation>
</comment>
<comment type="similarity">
    <text evidence="3">Belongs to the sauvagine/corticotropin-releasing factor/urotensin I family.</text>
</comment>
<reference key="1">
    <citation type="journal article" date="1999" name="Gen. Comp. Endocrinol.">
        <title>Differential expression of corticotropin-releasing factor (CRF) and urotensin I precursor genes, and evidence of CRF gene expression regulated by cortisol in goldfish brain.</title>
        <authorList>
            <person name="Bernier N.J."/>
            <person name="Lin X."/>
            <person name="Peter R.E."/>
        </authorList>
    </citation>
    <scope>NUCLEOTIDE SEQUENCE [MRNA]</scope>
    <source>
        <tissue>Brain</tissue>
    </source>
</reference>